<accession>Q58CY8</accession>
<gene>
    <name evidence="1" type="primary">TSPAN18</name>
</gene>
<proteinExistence type="evidence at transcript level"/>
<sequence length="249" mass="27710">MEGDCLSCMKYLMFVFNFFIFLGGACLLGIGIWVMVDPTGFREIVAANPLLITGAYILLAMGGLLFLLGFLGCCGAVRENKCLLLFFFLFILIIFLAELSAAILAFIFRGNLTREFFTKELTKHYQGSNDTDVFSATWNSVMITFGCCGVNGPEDFKYASVFRLLTLDSDEVPEACCRREPQSRDGVLLSREECLLGRDLFLNKQGCYTVILNAFETYVYLAGALAIGVLAIELFAMIFAMCLFRGIIQ</sequence>
<feature type="chain" id="PRO_0000219267" description="Tetraspanin-18">
    <location>
        <begin position="1"/>
        <end position="249"/>
    </location>
</feature>
<feature type="topological domain" description="Cytoplasmic" evidence="2">
    <location>
        <begin position="1"/>
        <end position="13"/>
    </location>
</feature>
<feature type="transmembrane region" description="Helical" evidence="2">
    <location>
        <begin position="14"/>
        <end position="34"/>
    </location>
</feature>
<feature type="topological domain" description="Extracellular" evidence="2">
    <location>
        <begin position="35"/>
        <end position="49"/>
    </location>
</feature>
<feature type="transmembrane region" description="Helical" evidence="2">
    <location>
        <begin position="50"/>
        <end position="70"/>
    </location>
</feature>
<feature type="topological domain" description="Cytoplasmic" evidence="2">
    <location>
        <begin position="71"/>
        <end position="83"/>
    </location>
</feature>
<feature type="transmembrane region" description="Helical" evidence="2">
    <location>
        <begin position="84"/>
        <end position="104"/>
    </location>
</feature>
<feature type="topological domain" description="Extracellular" evidence="2">
    <location>
        <begin position="105"/>
        <end position="223"/>
    </location>
</feature>
<feature type="transmembrane region" description="Helical" evidence="2">
    <location>
        <begin position="224"/>
        <end position="244"/>
    </location>
</feature>
<feature type="topological domain" description="Cytoplasmic" evidence="2">
    <location>
        <begin position="245"/>
        <end position="249"/>
    </location>
</feature>
<feature type="glycosylation site" description="N-linked (GlcNAc...) asparagine" evidence="2">
    <location>
        <position position="111"/>
    </location>
</feature>
<feature type="glycosylation site" description="N-linked (GlcNAc...) asparagine" evidence="2">
    <location>
        <position position="129"/>
    </location>
</feature>
<protein>
    <recommendedName>
        <fullName evidence="1">Tetraspanin-18</fullName>
        <shortName evidence="1">Tspan-18</shortName>
    </recommendedName>
</protein>
<reference key="1">
    <citation type="journal article" date="2005" name="BMC Genomics">
        <title>Characterization of 954 bovine full-CDS cDNA sequences.</title>
        <authorList>
            <person name="Harhay G.P."/>
            <person name="Sonstegard T.S."/>
            <person name="Keele J.W."/>
            <person name="Heaton M.P."/>
            <person name="Clawson M.L."/>
            <person name="Snelling W.M."/>
            <person name="Wiedmann R.T."/>
            <person name="Van Tassell C.P."/>
            <person name="Smith T.P.L."/>
        </authorList>
    </citation>
    <scope>NUCLEOTIDE SEQUENCE [LARGE SCALE MRNA]</scope>
</reference>
<keyword id="KW-0325">Glycoprotein</keyword>
<keyword id="KW-0472">Membrane</keyword>
<keyword id="KW-1185">Reference proteome</keyword>
<keyword id="KW-0812">Transmembrane</keyword>
<keyword id="KW-1133">Transmembrane helix</keyword>
<evidence type="ECO:0000250" key="1">
    <source>
        <dbReference type="UniProtKB" id="Q96SJ8"/>
    </source>
</evidence>
<evidence type="ECO:0000255" key="2"/>
<evidence type="ECO:0000305" key="3"/>
<dbReference type="EMBL" id="BT021809">
    <property type="protein sequence ID" value="AAX46656.1"/>
    <property type="molecule type" value="mRNA"/>
</dbReference>
<dbReference type="RefSeq" id="NP_001074389.1">
    <property type="nucleotide sequence ID" value="NM_001080920.1"/>
</dbReference>
<dbReference type="RefSeq" id="XP_024831337.1">
    <property type="nucleotide sequence ID" value="XM_024975569.2"/>
</dbReference>
<dbReference type="RefSeq" id="XP_059730986.1">
    <property type="nucleotide sequence ID" value="XM_059875003.1"/>
</dbReference>
<dbReference type="RefSeq" id="XP_059730987.1">
    <property type="nucleotide sequence ID" value="XM_059875004.1"/>
</dbReference>
<dbReference type="RefSeq" id="XP_059730988.1">
    <property type="nucleotide sequence ID" value="XM_059875005.1"/>
</dbReference>
<dbReference type="SMR" id="Q58CY8"/>
<dbReference type="FunCoup" id="Q58CY8">
    <property type="interactions" value="83"/>
</dbReference>
<dbReference type="STRING" id="9913.ENSBTAP00000028636"/>
<dbReference type="GlyCosmos" id="Q58CY8">
    <property type="glycosylation" value="2 sites, No reported glycans"/>
</dbReference>
<dbReference type="GlyGen" id="Q58CY8">
    <property type="glycosylation" value="2 sites"/>
</dbReference>
<dbReference type="PaxDb" id="9913-ENSBTAP00000028636"/>
<dbReference type="Ensembl" id="ENSBTAT00000028636.5">
    <property type="protein sequence ID" value="ENSBTAP00000028636.5"/>
    <property type="gene ID" value="ENSBTAG00000021484.6"/>
</dbReference>
<dbReference type="GeneID" id="783765"/>
<dbReference type="KEGG" id="bta:783765"/>
<dbReference type="CTD" id="90139"/>
<dbReference type="VEuPathDB" id="HostDB:ENSBTAG00000021484"/>
<dbReference type="VGNC" id="VGNC:36433">
    <property type="gene designation" value="TSPAN18"/>
</dbReference>
<dbReference type="eggNOG" id="KOG3882">
    <property type="taxonomic scope" value="Eukaryota"/>
</dbReference>
<dbReference type="GeneTree" id="ENSGT00940000157667"/>
<dbReference type="InParanoid" id="Q58CY8"/>
<dbReference type="OMA" id="ACCQREP"/>
<dbReference type="OrthoDB" id="71600at2759"/>
<dbReference type="Proteomes" id="UP000009136">
    <property type="component" value="Chromosome 15"/>
</dbReference>
<dbReference type="Bgee" id="ENSBTAG00000021484">
    <property type="expression patterns" value="Expressed in vas deferens and 100 other cell types or tissues"/>
</dbReference>
<dbReference type="GO" id="GO:0005886">
    <property type="term" value="C:plasma membrane"/>
    <property type="evidence" value="ECO:0000318"/>
    <property type="project" value="GO_Central"/>
</dbReference>
<dbReference type="GO" id="GO:1903670">
    <property type="term" value="P:regulation of sprouting angiogenesis"/>
    <property type="evidence" value="ECO:0000250"/>
    <property type="project" value="UniProtKB"/>
</dbReference>
<dbReference type="CDD" id="cd03156">
    <property type="entry name" value="uroplakin_I_like_LEL"/>
    <property type="match status" value="1"/>
</dbReference>
<dbReference type="FunFam" id="1.10.1450.10:FF:000012">
    <property type="entry name" value="Tetraspanin"/>
    <property type="match status" value="1"/>
</dbReference>
<dbReference type="Gene3D" id="1.10.1450.10">
    <property type="entry name" value="Tetraspanin"/>
    <property type="match status" value="1"/>
</dbReference>
<dbReference type="InterPro" id="IPR018499">
    <property type="entry name" value="Tetraspanin/Peripherin"/>
</dbReference>
<dbReference type="InterPro" id="IPR000301">
    <property type="entry name" value="Tetraspanin_animals"/>
</dbReference>
<dbReference type="InterPro" id="IPR018503">
    <property type="entry name" value="Tetraspanin_CS"/>
</dbReference>
<dbReference type="InterPro" id="IPR008952">
    <property type="entry name" value="Tetraspanin_EC2_sf"/>
</dbReference>
<dbReference type="PANTHER" id="PTHR19282">
    <property type="entry name" value="TETRASPANIN"/>
    <property type="match status" value="1"/>
</dbReference>
<dbReference type="PANTHER" id="PTHR19282:SF249">
    <property type="entry name" value="TETRASPANIN-18"/>
    <property type="match status" value="1"/>
</dbReference>
<dbReference type="Pfam" id="PF00335">
    <property type="entry name" value="Tetraspanin"/>
    <property type="match status" value="1"/>
</dbReference>
<dbReference type="PIRSF" id="PIRSF002419">
    <property type="entry name" value="Tetraspanin"/>
    <property type="match status" value="1"/>
</dbReference>
<dbReference type="PRINTS" id="PR00259">
    <property type="entry name" value="TMFOUR"/>
</dbReference>
<dbReference type="SUPFAM" id="SSF48652">
    <property type="entry name" value="Tetraspanin"/>
    <property type="match status" value="1"/>
</dbReference>
<dbReference type="PROSITE" id="PS00421">
    <property type="entry name" value="TM4_1"/>
    <property type="match status" value="1"/>
</dbReference>
<organism>
    <name type="scientific">Bos taurus</name>
    <name type="common">Bovine</name>
    <dbReference type="NCBI Taxonomy" id="9913"/>
    <lineage>
        <taxon>Eukaryota</taxon>
        <taxon>Metazoa</taxon>
        <taxon>Chordata</taxon>
        <taxon>Craniata</taxon>
        <taxon>Vertebrata</taxon>
        <taxon>Euteleostomi</taxon>
        <taxon>Mammalia</taxon>
        <taxon>Eutheria</taxon>
        <taxon>Laurasiatheria</taxon>
        <taxon>Artiodactyla</taxon>
        <taxon>Ruminantia</taxon>
        <taxon>Pecora</taxon>
        <taxon>Bovidae</taxon>
        <taxon>Bovinae</taxon>
        <taxon>Bos</taxon>
    </lineage>
</organism>
<name>TSN18_BOVIN</name>
<comment type="function">
    <text evidence="1">Plays a role in the cell surface localization of ORAI1 and may participate in the regulation of Ca(2+) signaling and the VWF release in response to inflammatory stimuli.</text>
</comment>
<comment type="subunit">
    <text evidence="1">Interacts with ORAI1; this interaction regulates ORAI1 exit from the endoplasmic (ER), and/or Golgi, and trafficking to the cell surface.</text>
</comment>
<comment type="subcellular location">
    <subcellularLocation>
        <location evidence="2">Membrane</location>
        <topology evidence="2">Multi-pass membrane protein</topology>
    </subcellularLocation>
</comment>
<comment type="similarity">
    <text evidence="3">Belongs to the tetraspanin (TM4SF) family.</text>
</comment>